<sequence>MQMIDIRPPDPRHFISGSTGDWEVVIGMEVHAQIVSDSKLFSGASTKFGAEPNNHVSLIDAAMPGMLPVVNQECIRQAIRTGLGLKAQINLKSVFDRKNYFYPDLPQGYQISQFHYPIVGEGKVTISIGPDSNGQFEDVEIGIERLHLEQDAGKSIHDQHPTMSFVDLNRSGVALMEIVSKPDMRSSEEAKAYITKLRMILRYLGTCDGNMDEGSIRADVNVSVRRPGEPLGTRCEIKNVNSIRFIGQAIEYEARRQIAVLEDGGVIDPETRLFDAAKCETRSIRLKEEAHDYRYFPDPDLLPLEFDQAFVDALASELPELPDDIKARFINDMGLTVYDASILITEKEIADYFQKVARGRDGKMVANWVINDLLGALNKNNCKIEDTPVKPDQLGAIIDLIEEGIISGKIAKDLFEIIWHEGGDLRQIVEERGMKQVTDTGAIQSAVDEIMANNPDKVSQAKEKPALVGWFVGQVMKETGGKANPQTVNKLVKMKLEID</sequence>
<gene>
    <name evidence="1" type="primary">gatB</name>
    <name type="ordered locus">BARBAKC583_0554</name>
</gene>
<evidence type="ECO:0000255" key="1">
    <source>
        <dbReference type="HAMAP-Rule" id="MF_00121"/>
    </source>
</evidence>
<proteinExistence type="inferred from homology"/>
<organism>
    <name type="scientific">Bartonella bacilliformis (strain ATCC 35685 / KC583 / Herrer 020/F12,63)</name>
    <dbReference type="NCBI Taxonomy" id="360095"/>
    <lineage>
        <taxon>Bacteria</taxon>
        <taxon>Pseudomonadati</taxon>
        <taxon>Pseudomonadota</taxon>
        <taxon>Alphaproteobacteria</taxon>
        <taxon>Hyphomicrobiales</taxon>
        <taxon>Bartonellaceae</taxon>
        <taxon>Bartonella</taxon>
    </lineage>
</organism>
<reference key="1">
    <citation type="submission" date="2006-12" db="EMBL/GenBank/DDBJ databases">
        <authorList>
            <person name="Hendrix L."/>
            <person name="Mohamoud Y."/>
            <person name="Radune D."/>
            <person name="Shvartsbeyn A."/>
            <person name="Daugherty S."/>
            <person name="Dodson R."/>
            <person name="Durkin A.S."/>
            <person name="Harkins D."/>
            <person name="Huot H."/>
            <person name="Kothari S.P."/>
            <person name="Madupu R."/>
            <person name="Li J."/>
            <person name="Nelson W.C."/>
            <person name="Shrivastava S."/>
            <person name="Giglio M.G."/>
            <person name="Haft D."/>
            <person name="Selengut J."/>
            <person name="Fraser-Ligget C."/>
            <person name="Seshadri R."/>
        </authorList>
    </citation>
    <scope>NUCLEOTIDE SEQUENCE [LARGE SCALE GENOMIC DNA]</scope>
    <source>
        <strain>ATCC 35685 / KC583 / Herrer 020/F12,63</strain>
    </source>
</reference>
<keyword id="KW-0067">ATP-binding</keyword>
<keyword id="KW-0436">Ligase</keyword>
<keyword id="KW-0547">Nucleotide-binding</keyword>
<keyword id="KW-0648">Protein biosynthesis</keyword>
<feature type="chain" id="PRO_1000015936" description="Aspartyl/glutamyl-tRNA(Asn/Gln) amidotransferase subunit B">
    <location>
        <begin position="1"/>
        <end position="499"/>
    </location>
</feature>
<name>GATB_BARBK</name>
<dbReference type="EC" id="6.3.5.-" evidence="1"/>
<dbReference type="EMBL" id="CP000524">
    <property type="protein sequence ID" value="ABM45052.1"/>
    <property type="molecule type" value="Genomic_DNA"/>
</dbReference>
<dbReference type="RefSeq" id="WP_005766696.1">
    <property type="nucleotide sequence ID" value="NC_008783.1"/>
</dbReference>
<dbReference type="SMR" id="A1USB4"/>
<dbReference type="STRING" id="360095.BARBAKC583_0554"/>
<dbReference type="GeneID" id="4683902"/>
<dbReference type="KEGG" id="bbk:BARBAKC583_0554"/>
<dbReference type="PATRIC" id="fig|360095.6.peg.539"/>
<dbReference type="eggNOG" id="COG0064">
    <property type="taxonomic scope" value="Bacteria"/>
</dbReference>
<dbReference type="HOGENOM" id="CLU_019240_1_1_5"/>
<dbReference type="OrthoDB" id="9804078at2"/>
<dbReference type="Proteomes" id="UP000000643">
    <property type="component" value="Chromosome"/>
</dbReference>
<dbReference type="GO" id="GO:0050566">
    <property type="term" value="F:asparaginyl-tRNA synthase (glutamine-hydrolyzing) activity"/>
    <property type="evidence" value="ECO:0007669"/>
    <property type="project" value="RHEA"/>
</dbReference>
<dbReference type="GO" id="GO:0005524">
    <property type="term" value="F:ATP binding"/>
    <property type="evidence" value="ECO:0007669"/>
    <property type="project" value="UniProtKB-KW"/>
</dbReference>
<dbReference type="GO" id="GO:0050567">
    <property type="term" value="F:glutaminyl-tRNA synthase (glutamine-hydrolyzing) activity"/>
    <property type="evidence" value="ECO:0007669"/>
    <property type="project" value="UniProtKB-UniRule"/>
</dbReference>
<dbReference type="GO" id="GO:0070681">
    <property type="term" value="P:glutaminyl-tRNAGln biosynthesis via transamidation"/>
    <property type="evidence" value="ECO:0007669"/>
    <property type="project" value="TreeGrafter"/>
</dbReference>
<dbReference type="GO" id="GO:0006412">
    <property type="term" value="P:translation"/>
    <property type="evidence" value="ECO:0007669"/>
    <property type="project" value="UniProtKB-UniRule"/>
</dbReference>
<dbReference type="FunFam" id="1.10.10.410:FF:000001">
    <property type="entry name" value="Aspartyl/glutamyl-tRNA(Asn/Gln) amidotransferase subunit B"/>
    <property type="match status" value="1"/>
</dbReference>
<dbReference type="Gene3D" id="1.10.10.410">
    <property type="match status" value="1"/>
</dbReference>
<dbReference type="Gene3D" id="1.10.150.380">
    <property type="entry name" value="GatB domain, N-terminal subdomain"/>
    <property type="match status" value="1"/>
</dbReference>
<dbReference type="HAMAP" id="MF_00121">
    <property type="entry name" value="GatB"/>
    <property type="match status" value="1"/>
</dbReference>
<dbReference type="InterPro" id="IPR017959">
    <property type="entry name" value="Asn/Gln-tRNA_amidoTrfase_suB/E"/>
</dbReference>
<dbReference type="InterPro" id="IPR006075">
    <property type="entry name" value="Asn/Gln-tRNA_Trfase_suB/E_cat"/>
</dbReference>
<dbReference type="InterPro" id="IPR018027">
    <property type="entry name" value="Asn/Gln_amidotransferase"/>
</dbReference>
<dbReference type="InterPro" id="IPR003789">
    <property type="entry name" value="Asn/Gln_tRNA_amidoTrase-B-like"/>
</dbReference>
<dbReference type="InterPro" id="IPR004413">
    <property type="entry name" value="GatB"/>
</dbReference>
<dbReference type="InterPro" id="IPR042114">
    <property type="entry name" value="GatB_C_1"/>
</dbReference>
<dbReference type="InterPro" id="IPR023168">
    <property type="entry name" value="GatB_Yqey_C_2"/>
</dbReference>
<dbReference type="InterPro" id="IPR017958">
    <property type="entry name" value="Gln-tRNA_amidoTrfase_suB_CS"/>
</dbReference>
<dbReference type="InterPro" id="IPR014746">
    <property type="entry name" value="Gln_synth/guanido_kin_cat_dom"/>
</dbReference>
<dbReference type="NCBIfam" id="TIGR00133">
    <property type="entry name" value="gatB"/>
    <property type="match status" value="1"/>
</dbReference>
<dbReference type="NCBIfam" id="NF004012">
    <property type="entry name" value="PRK05477.1-2"/>
    <property type="match status" value="1"/>
</dbReference>
<dbReference type="NCBIfam" id="NF004014">
    <property type="entry name" value="PRK05477.1-4"/>
    <property type="match status" value="1"/>
</dbReference>
<dbReference type="NCBIfam" id="NF004015">
    <property type="entry name" value="PRK05477.1-5"/>
    <property type="match status" value="1"/>
</dbReference>
<dbReference type="PANTHER" id="PTHR11659">
    <property type="entry name" value="GLUTAMYL-TRNA GLN AMIDOTRANSFERASE SUBUNIT B MITOCHONDRIAL AND PROKARYOTIC PET112-RELATED"/>
    <property type="match status" value="1"/>
</dbReference>
<dbReference type="PANTHER" id="PTHR11659:SF0">
    <property type="entry name" value="GLUTAMYL-TRNA(GLN) AMIDOTRANSFERASE SUBUNIT B, MITOCHONDRIAL"/>
    <property type="match status" value="1"/>
</dbReference>
<dbReference type="Pfam" id="PF02934">
    <property type="entry name" value="GatB_N"/>
    <property type="match status" value="1"/>
</dbReference>
<dbReference type="Pfam" id="PF02637">
    <property type="entry name" value="GatB_Yqey"/>
    <property type="match status" value="1"/>
</dbReference>
<dbReference type="SMART" id="SM00845">
    <property type="entry name" value="GatB_Yqey"/>
    <property type="match status" value="1"/>
</dbReference>
<dbReference type="SUPFAM" id="SSF89095">
    <property type="entry name" value="GatB/YqeY motif"/>
    <property type="match status" value="1"/>
</dbReference>
<dbReference type="SUPFAM" id="SSF55931">
    <property type="entry name" value="Glutamine synthetase/guanido kinase"/>
    <property type="match status" value="1"/>
</dbReference>
<dbReference type="PROSITE" id="PS01234">
    <property type="entry name" value="GATB"/>
    <property type="match status" value="1"/>
</dbReference>
<comment type="function">
    <text evidence="1">Allows the formation of correctly charged Asn-tRNA(Asn) or Gln-tRNA(Gln) through the transamidation of misacylated Asp-tRNA(Asn) or Glu-tRNA(Gln) in organisms which lack either or both of asparaginyl-tRNA or glutaminyl-tRNA synthetases. The reaction takes place in the presence of glutamine and ATP through an activated phospho-Asp-tRNA(Asn) or phospho-Glu-tRNA(Gln).</text>
</comment>
<comment type="catalytic activity">
    <reaction evidence="1">
        <text>L-glutamyl-tRNA(Gln) + L-glutamine + ATP + H2O = L-glutaminyl-tRNA(Gln) + L-glutamate + ADP + phosphate + H(+)</text>
        <dbReference type="Rhea" id="RHEA:17521"/>
        <dbReference type="Rhea" id="RHEA-COMP:9681"/>
        <dbReference type="Rhea" id="RHEA-COMP:9684"/>
        <dbReference type="ChEBI" id="CHEBI:15377"/>
        <dbReference type="ChEBI" id="CHEBI:15378"/>
        <dbReference type="ChEBI" id="CHEBI:29985"/>
        <dbReference type="ChEBI" id="CHEBI:30616"/>
        <dbReference type="ChEBI" id="CHEBI:43474"/>
        <dbReference type="ChEBI" id="CHEBI:58359"/>
        <dbReference type="ChEBI" id="CHEBI:78520"/>
        <dbReference type="ChEBI" id="CHEBI:78521"/>
        <dbReference type="ChEBI" id="CHEBI:456216"/>
    </reaction>
</comment>
<comment type="catalytic activity">
    <reaction evidence="1">
        <text>L-aspartyl-tRNA(Asn) + L-glutamine + ATP + H2O = L-asparaginyl-tRNA(Asn) + L-glutamate + ADP + phosphate + 2 H(+)</text>
        <dbReference type="Rhea" id="RHEA:14513"/>
        <dbReference type="Rhea" id="RHEA-COMP:9674"/>
        <dbReference type="Rhea" id="RHEA-COMP:9677"/>
        <dbReference type="ChEBI" id="CHEBI:15377"/>
        <dbReference type="ChEBI" id="CHEBI:15378"/>
        <dbReference type="ChEBI" id="CHEBI:29985"/>
        <dbReference type="ChEBI" id="CHEBI:30616"/>
        <dbReference type="ChEBI" id="CHEBI:43474"/>
        <dbReference type="ChEBI" id="CHEBI:58359"/>
        <dbReference type="ChEBI" id="CHEBI:78515"/>
        <dbReference type="ChEBI" id="CHEBI:78516"/>
        <dbReference type="ChEBI" id="CHEBI:456216"/>
    </reaction>
</comment>
<comment type="subunit">
    <text evidence="1">Heterotrimer of A, B and C subunits.</text>
</comment>
<comment type="similarity">
    <text evidence="1">Belongs to the GatB/GatE family. GatB subfamily.</text>
</comment>
<accession>A1USB4</accession>
<protein>
    <recommendedName>
        <fullName evidence="1">Aspartyl/glutamyl-tRNA(Asn/Gln) amidotransferase subunit B</fullName>
        <shortName evidence="1">Asp/Glu-ADT subunit B</shortName>
        <ecNumber evidence="1">6.3.5.-</ecNumber>
    </recommendedName>
</protein>